<sequence>MWPAPCSVGRLLIFFMCSSSGYVVQGCGPSPGARTTLGSPLSLWSIKTPSHIFCTRRAINLGFPSPPLVQLIFWSLNAGLDLYLCLISSCGFSQVFWPVEAFCSFSLSFFALALSHKFVICRLDQHIFSGFTKSLKNLPPCHRTDI</sequence>
<proteinExistence type="evidence at protein level"/>
<reference key="1">
    <citation type="journal article" date="2004" name="Nat. Genet.">
        <title>Complete sequencing and characterization of 21,243 full-length human cDNAs.</title>
        <authorList>
            <person name="Ota T."/>
            <person name="Suzuki Y."/>
            <person name="Nishikawa T."/>
            <person name="Otsuki T."/>
            <person name="Sugiyama T."/>
            <person name="Irie R."/>
            <person name="Wakamatsu A."/>
            <person name="Hayashi K."/>
            <person name="Sato H."/>
            <person name="Nagai K."/>
            <person name="Kimura K."/>
            <person name="Makita H."/>
            <person name="Sekine M."/>
            <person name="Obayashi M."/>
            <person name="Nishi T."/>
            <person name="Shibahara T."/>
            <person name="Tanaka T."/>
            <person name="Ishii S."/>
            <person name="Yamamoto J."/>
            <person name="Saito K."/>
            <person name="Kawai Y."/>
            <person name="Isono Y."/>
            <person name="Nakamura Y."/>
            <person name="Nagahari K."/>
            <person name="Murakami K."/>
            <person name="Yasuda T."/>
            <person name="Iwayanagi T."/>
            <person name="Wagatsuma M."/>
            <person name="Shiratori A."/>
            <person name="Sudo H."/>
            <person name="Hosoiri T."/>
            <person name="Kaku Y."/>
            <person name="Kodaira H."/>
            <person name="Kondo H."/>
            <person name="Sugawara M."/>
            <person name="Takahashi M."/>
            <person name="Kanda K."/>
            <person name="Yokoi T."/>
            <person name="Furuya T."/>
            <person name="Kikkawa E."/>
            <person name="Omura Y."/>
            <person name="Abe K."/>
            <person name="Kamihara K."/>
            <person name="Katsuta N."/>
            <person name="Sato K."/>
            <person name="Tanikawa M."/>
            <person name="Yamazaki M."/>
            <person name="Ninomiya K."/>
            <person name="Ishibashi T."/>
            <person name="Yamashita H."/>
            <person name="Murakawa K."/>
            <person name="Fujimori K."/>
            <person name="Tanai H."/>
            <person name="Kimata M."/>
            <person name="Watanabe M."/>
            <person name="Hiraoka S."/>
            <person name="Chiba Y."/>
            <person name="Ishida S."/>
            <person name="Ono Y."/>
            <person name="Takiguchi S."/>
            <person name="Watanabe S."/>
            <person name="Yosida M."/>
            <person name="Hotuta T."/>
            <person name="Kusano J."/>
            <person name="Kanehori K."/>
            <person name="Takahashi-Fujii A."/>
            <person name="Hara H."/>
            <person name="Tanase T.-O."/>
            <person name="Nomura Y."/>
            <person name="Togiya S."/>
            <person name="Komai F."/>
            <person name="Hara R."/>
            <person name="Takeuchi K."/>
            <person name="Arita M."/>
            <person name="Imose N."/>
            <person name="Musashino K."/>
            <person name="Yuuki H."/>
            <person name="Oshima A."/>
            <person name="Sasaki N."/>
            <person name="Aotsuka S."/>
            <person name="Yoshikawa Y."/>
            <person name="Matsunawa H."/>
            <person name="Ichihara T."/>
            <person name="Shiohata N."/>
            <person name="Sano S."/>
            <person name="Moriya S."/>
            <person name="Momiyama H."/>
            <person name="Satoh N."/>
            <person name="Takami S."/>
            <person name="Terashima Y."/>
            <person name="Suzuki O."/>
            <person name="Nakagawa S."/>
            <person name="Senoh A."/>
            <person name="Mizoguchi H."/>
            <person name="Goto Y."/>
            <person name="Shimizu F."/>
            <person name="Wakebe H."/>
            <person name="Hishigaki H."/>
            <person name="Watanabe T."/>
            <person name="Sugiyama A."/>
            <person name="Takemoto M."/>
            <person name="Kawakami B."/>
            <person name="Yamazaki M."/>
            <person name="Watanabe K."/>
            <person name="Kumagai A."/>
            <person name="Itakura S."/>
            <person name="Fukuzumi Y."/>
            <person name="Fujimori Y."/>
            <person name="Komiyama M."/>
            <person name="Tashiro H."/>
            <person name="Tanigami A."/>
            <person name="Fujiwara T."/>
            <person name="Ono T."/>
            <person name="Yamada K."/>
            <person name="Fujii Y."/>
            <person name="Ozaki K."/>
            <person name="Hirao M."/>
            <person name="Ohmori Y."/>
            <person name="Kawabata A."/>
            <person name="Hikiji T."/>
            <person name="Kobatake N."/>
            <person name="Inagaki H."/>
            <person name="Ikema Y."/>
            <person name="Okamoto S."/>
            <person name="Okitani R."/>
            <person name="Kawakami T."/>
            <person name="Noguchi S."/>
            <person name="Itoh T."/>
            <person name="Shigeta K."/>
            <person name="Senba T."/>
            <person name="Matsumura K."/>
            <person name="Nakajima Y."/>
            <person name="Mizuno T."/>
            <person name="Morinaga M."/>
            <person name="Sasaki M."/>
            <person name="Togashi T."/>
            <person name="Oyama M."/>
            <person name="Hata H."/>
            <person name="Watanabe M."/>
            <person name="Komatsu T."/>
            <person name="Mizushima-Sugano J."/>
            <person name="Satoh T."/>
            <person name="Shirai Y."/>
            <person name="Takahashi Y."/>
            <person name="Nakagawa K."/>
            <person name="Okumura K."/>
            <person name="Nagase T."/>
            <person name="Nomura N."/>
            <person name="Kikuchi H."/>
            <person name="Masuho Y."/>
            <person name="Yamashita R."/>
            <person name="Nakai K."/>
            <person name="Yada T."/>
            <person name="Nakamura Y."/>
            <person name="Ohara O."/>
            <person name="Isogai T."/>
            <person name="Sugano S."/>
        </authorList>
    </citation>
    <scope>NUCLEOTIDE SEQUENCE [LARGE SCALE MRNA]</scope>
    <source>
        <tissue>Synovium</tissue>
    </source>
</reference>
<reference key="2">
    <citation type="journal article" date="2003" name="Nature">
        <title>The DNA sequence and analysis of human chromosome 6.</title>
        <authorList>
            <person name="Mungall A.J."/>
            <person name="Palmer S.A."/>
            <person name="Sims S.K."/>
            <person name="Edwards C.A."/>
            <person name="Ashurst J.L."/>
            <person name="Wilming L."/>
            <person name="Jones M.C."/>
            <person name="Horton R."/>
            <person name="Hunt S.E."/>
            <person name="Scott C.E."/>
            <person name="Gilbert J.G.R."/>
            <person name="Clamp M.E."/>
            <person name="Bethel G."/>
            <person name="Milne S."/>
            <person name="Ainscough R."/>
            <person name="Almeida J.P."/>
            <person name="Ambrose K.D."/>
            <person name="Andrews T.D."/>
            <person name="Ashwell R.I.S."/>
            <person name="Babbage A.K."/>
            <person name="Bagguley C.L."/>
            <person name="Bailey J."/>
            <person name="Banerjee R."/>
            <person name="Barker D.J."/>
            <person name="Barlow K.F."/>
            <person name="Bates K."/>
            <person name="Beare D.M."/>
            <person name="Beasley H."/>
            <person name="Beasley O."/>
            <person name="Bird C.P."/>
            <person name="Blakey S.E."/>
            <person name="Bray-Allen S."/>
            <person name="Brook J."/>
            <person name="Brown A.J."/>
            <person name="Brown J.Y."/>
            <person name="Burford D.C."/>
            <person name="Burrill W."/>
            <person name="Burton J."/>
            <person name="Carder C."/>
            <person name="Carter N.P."/>
            <person name="Chapman J.C."/>
            <person name="Clark S.Y."/>
            <person name="Clark G."/>
            <person name="Clee C.M."/>
            <person name="Clegg S."/>
            <person name="Cobley V."/>
            <person name="Collier R.E."/>
            <person name="Collins J.E."/>
            <person name="Colman L.K."/>
            <person name="Corby N.R."/>
            <person name="Coville G.J."/>
            <person name="Culley K.M."/>
            <person name="Dhami P."/>
            <person name="Davies J."/>
            <person name="Dunn M."/>
            <person name="Earthrowl M.E."/>
            <person name="Ellington A.E."/>
            <person name="Evans K.A."/>
            <person name="Faulkner L."/>
            <person name="Francis M.D."/>
            <person name="Frankish A."/>
            <person name="Frankland J."/>
            <person name="French L."/>
            <person name="Garner P."/>
            <person name="Garnett J."/>
            <person name="Ghori M.J."/>
            <person name="Gilby L.M."/>
            <person name="Gillson C.J."/>
            <person name="Glithero R.J."/>
            <person name="Grafham D.V."/>
            <person name="Grant M."/>
            <person name="Gribble S."/>
            <person name="Griffiths C."/>
            <person name="Griffiths M.N.D."/>
            <person name="Hall R."/>
            <person name="Halls K.S."/>
            <person name="Hammond S."/>
            <person name="Harley J.L."/>
            <person name="Hart E.A."/>
            <person name="Heath P.D."/>
            <person name="Heathcott R."/>
            <person name="Holmes S.J."/>
            <person name="Howden P.J."/>
            <person name="Howe K.L."/>
            <person name="Howell G.R."/>
            <person name="Huckle E."/>
            <person name="Humphray S.J."/>
            <person name="Humphries M.D."/>
            <person name="Hunt A.R."/>
            <person name="Johnson C.M."/>
            <person name="Joy A.A."/>
            <person name="Kay M."/>
            <person name="Keenan S.J."/>
            <person name="Kimberley A.M."/>
            <person name="King A."/>
            <person name="Laird G.K."/>
            <person name="Langford C."/>
            <person name="Lawlor S."/>
            <person name="Leongamornlert D.A."/>
            <person name="Leversha M."/>
            <person name="Lloyd C.R."/>
            <person name="Lloyd D.M."/>
            <person name="Loveland J.E."/>
            <person name="Lovell J."/>
            <person name="Martin S."/>
            <person name="Mashreghi-Mohammadi M."/>
            <person name="Maslen G.L."/>
            <person name="Matthews L."/>
            <person name="McCann O.T."/>
            <person name="McLaren S.J."/>
            <person name="McLay K."/>
            <person name="McMurray A."/>
            <person name="Moore M.J.F."/>
            <person name="Mullikin J.C."/>
            <person name="Niblett D."/>
            <person name="Nickerson T."/>
            <person name="Novik K.L."/>
            <person name="Oliver K."/>
            <person name="Overton-Larty E.K."/>
            <person name="Parker A."/>
            <person name="Patel R."/>
            <person name="Pearce A.V."/>
            <person name="Peck A.I."/>
            <person name="Phillimore B.J.C.T."/>
            <person name="Phillips S."/>
            <person name="Plumb R.W."/>
            <person name="Porter K.M."/>
            <person name="Ramsey Y."/>
            <person name="Ranby S.A."/>
            <person name="Rice C.M."/>
            <person name="Ross M.T."/>
            <person name="Searle S.M."/>
            <person name="Sehra H.K."/>
            <person name="Sheridan E."/>
            <person name="Skuce C.D."/>
            <person name="Smith S."/>
            <person name="Smith M."/>
            <person name="Spraggon L."/>
            <person name="Squares S.L."/>
            <person name="Steward C.A."/>
            <person name="Sycamore N."/>
            <person name="Tamlyn-Hall G."/>
            <person name="Tester J."/>
            <person name="Theaker A.J."/>
            <person name="Thomas D.W."/>
            <person name="Thorpe A."/>
            <person name="Tracey A."/>
            <person name="Tromans A."/>
            <person name="Tubby B."/>
            <person name="Wall M."/>
            <person name="Wallis J.M."/>
            <person name="West A.P."/>
            <person name="White S.S."/>
            <person name="Whitehead S.L."/>
            <person name="Whittaker H."/>
            <person name="Wild A."/>
            <person name="Willey D.J."/>
            <person name="Wilmer T.E."/>
            <person name="Wood J.M."/>
            <person name="Wray P.W."/>
            <person name="Wyatt J.C."/>
            <person name="Young L."/>
            <person name="Younger R.M."/>
            <person name="Bentley D.R."/>
            <person name="Coulson A."/>
            <person name="Durbin R.M."/>
            <person name="Hubbard T."/>
            <person name="Sulston J.E."/>
            <person name="Dunham I."/>
            <person name="Rogers J."/>
            <person name="Beck S."/>
        </authorList>
    </citation>
    <scope>NUCLEOTIDE SEQUENCE [LARGE SCALE GENOMIC DNA]</scope>
</reference>
<reference key="3">
    <citation type="journal article" date="2011" name="Mol. Neurodegener.">
        <title>A novel neuron-enriched protein SDIM1 is down regulated in Alzheimer's brains and attenuates cell death induced by DNAJB4 over-expression in neuro-progenitor cells.</title>
        <authorList>
            <person name="Lei J.X."/>
            <person name="Cassone C.G."/>
            <person name="Luebbert C."/>
            <person name="Liu Q.Y."/>
        </authorList>
    </citation>
    <scope>FUNCTION</scope>
    <scope>TISSUE SPECIFICITY</scope>
    <scope>INDUCTION BY STRESS</scope>
    <scope>INTERACTION WITH DNAJB4</scope>
</reference>
<dbReference type="EMBL" id="AK129633">
    <property type="protein sequence ID" value="BAC85201.1"/>
    <property type="molecule type" value="mRNA"/>
</dbReference>
<dbReference type="EMBL" id="AL590482">
    <property type="status" value="NOT_ANNOTATED_CDS"/>
    <property type="molecule type" value="Genomic_DNA"/>
</dbReference>
<dbReference type="FunCoup" id="Q6ZPB5">
    <property type="interactions" value="1"/>
</dbReference>
<dbReference type="BioMuta" id="HGNC:38749"/>
<dbReference type="AGR" id="HGNC:38749"/>
<dbReference type="GeneCards" id="SDIM1"/>
<dbReference type="HGNC" id="HGNC:38749">
    <property type="gene designation" value="SDIM1"/>
</dbReference>
<dbReference type="neXtProt" id="NX_Q6ZPB5"/>
<dbReference type="InParanoid" id="Q6ZPB5"/>
<dbReference type="PAN-GO" id="Q6ZPB5">
    <property type="GO annotations" value="0 GO annotations based on evolutionary models"/>
</dbReference>
<dbReference type="Pharos" id="Q6ZPB5">
    <property type="development level" value="Tbio"/>
</dbReference>
<dbReference type="PRO" id="PR:Q6ZPB5"/>
<dbReference type="Proteomes" id="UP000005640">
    <property type="component" value="Unplaced"/>
</dbReference>
<dbReference type="RNAct" id="Q6ZPB5">
    <property type="molecule type" value="protein"/>
</dbReference>
<dbReference type="GO" id="GO:0016020">
    <property type="term" value="C:membrane"/>
    <property type="evidence" value="ECO:0007669"/>
    <property type="project" value="UniProtKB-SubCell"/>
</dbReference>
<dbReference type="GO" id="GO:0042803">
    <property type="term" value="F:protein homodimerization activity"/>
    <property type="evidence" value="ECO:0000314"/>
    <property type="project" value="UniProtKB"/>
</dbReference>
<dbReference type="GO" id="GO:0006457">
    <property type="term" value="P:protein folding"/>
    <property type="evidence" value="ECO:0000353"/>
    <property type="project" value="UniProtKB"/>
</dbReference>
<organism>
    <name type="scientific">Homo sapiens</name>
    <name type="common">Human</name>
    <dbReference type="NCBI Taxonomy" id="9606"/>
    <lineage>
        <taxon>Eukaryota</taxon>
        <taxon>Metazoa</taxon>
        <taxon>Chordata</taxon>
        <taxon>Craniata</taxon>
        <taxon>Vertebrata</taxon>
        <taxon>Euteleostomi</taxon>
        <taxon>Mammalia</taxon>
        <taxon>Eutheria</taxon>
        <taxon>Euarchontoglires</taxon>
        <taxon>Primates</taxon>
        <taxon>Haplorrhini</taxon>
        <taxon>Catarrhini</taxon>
        <taxon>Hominidae</taxon>
        <taxon>Homo</taxon>
    </lineage>
</organism>
<comment type="function">
    <text evidence="2">Promotes neuronal cells survival to stress conditions.</text>
</comment>
<comment type="subunit">
    <text evidence="2">Homodimer. Interacts with DNAJB4.</text>
</comment>
<comment type="subcellular location">
    <subcellularLocation>
        <location evidence="3">Membrane</location>
        <topology evidence="3">Multi-pass membrane protein</topology>
    </subcellularLocation>
</comment>
<comment type="tissue specificity">
    <text evidence="2">Expressed in brain with higher detection in neurons than astrocytes. Decreased expression in Alzheimer brains. Detected at protein level in brain and cervix.</text>
</comment>
<comment type="induction">
    <text evidence="2">Down-regulated in NT2 neurons subjected to stress conditions which triggers neuronal apoptosis such as oxygen and glucose deprivation, followed by up-regulation in surviving cells.</text>
</comment>
<accession>Q6ZPB5</accession>
<protein>
    <recommendedName>
        <fullName>Stress-responsive DNAJB4-interacting membrane protein 1</fullName>
    </recommendedName>
</protein>
<name>SDIM1_HUMAN</name>
<keyword id="KW-0472">Membrane</keyword>
<keyword id="KW-1185">Reference proteome</keyword>
<keyword id="KW-0732">Signal</keyword>
<keyword id="KW-0812">Transmembrane</keyword>
<keyword id="KW-1133">Transmembrane helix</keyword>
<evidence type="ECO:0000255" key="1"/>
<evidence type="ECO:0000269" key="2">
    <source>
    </source>
</evidence>
<evidence type="ECO:0000305" key="3"/>
<gene>
    <name type="primary">SDIM1</name>
</gene>
<feature type="signal peptide" evidence="1">
    <location>
        <begin position="1"/>
        <end position="26"/>
    </location>
</feature>
<feature type="chain" id="PRO_0000406571" description="Stress-responsive DNAJB4-interacting membrane protein 1">
    <location>
        <begin position="27"/>
        <end position="146"/>
    </location>
</feature>
<feature type="topological domain" description="Extracellular" evidence="1">
    <location>
        <begin position="27"/>
        <end position="66"/>
    </location>
</feature>
<feature type="transmembrane region" description="Helical" evidence="1">
    <location>
        <begin position="67"/>
        <end position="87"/>
    </location>
</feature>
<feature type="topological domain" description="Cytoplasmic" evidence="1">
    <location>
        <begin position="88"/>
        <end position="94"/>
    </location>
</feature>
<feature type="transmembrane region" description="Helical" evidence="1">
    <location>
        <begin position="95"/>
        <end position="115"/>
    </location>
</feature>
<feature type="topological domain" description="Extracellular" evidence="1">
    <location>
        <begin position="116"/>
        <end position="146"/>
    </location>
</feature>
<feature type="sequence conflict" description="In Ref. 1; BAC85201." evidence="3" ref="1">
    <original>Y</original>
    <variation>N</variation>
    <location>
        <position position="22"/>
    </location>
</feature>
<feature type="sequence conflict" description="In Ref. 1; BAC85201." evidence="3" ref="1">
    <original>I</original>
    <variation>V</variation>
    <location>
        <position position="146"/>
    </location>
</feature>